<reference key="1">
    <citation type="journal article" date="1983" name="Nucleic Acids Res.">
        <title>The genes coding for histone H3 and H4 in Neurospora crassa are unique and contain intervening sequences.</title>
        <authorList>
            <person name="Woudt L.P."/>
            <person name="Pastink A."/>
            <person name="Kempers-Veenstra A.E."/>
            <person name="Jansen A.E.M."/>
            <person name="Mager W.H."/>
            <person name="Planta R.J."/>
        </authorList>
    </citation>
    <scope>NUCLEOTIDE SEQUENCE [GENOMIC DNA] (HH4-1)</scope>
</reference>
<reference key="2">
    <citation type="journal article" date="2002" name="Genetics">
        <title>Identification and characterization of the genes encoding the core histones and histone variants of Neurospora crassa.</title>
        <authorList>
            <person name="Hays S.M."/>
            <person name="Swanson J."/>
            <person name="Selker E.U."/>
        </authorList>
    </citation>
    <scope>NUCLEOTIDE SEQUENCE [GENOMIC DNA] (HH4-1 AND HH4-2)</scope>
</reference>
<reference key="3">
    <citation type="journal article" date="2003" name="Nucleic Acids Res.">
        <title>What's in the genome of a filamentous fungus? Analysis of the Neurospora genome sequence.</title>
        <authorList>
            <person name="Mannhaupt G."/>
            <person name="Montrone C."/>
            <person name="Haase D."/>
            <person name="Mewes H.-W."/>
            <person name="Aign V."/>
            <person name="Hoheisel J.D."/>
            <person name="Fartmann B."/>
            <person name="Nyakatura G."/>
            <person name="Kempken F."/>
            <person name="Maier J."/>
            <person name="Schulte U."/>
        </authorList>
    </citation>
    <scope>NUCLEOTIDE SEQUENCE [LARGE SCALE GENOMIC DNA] (HH4-1)</scope>
    <source>
        <strain>ATCC 24698 / 74-OR23-1A / CBS 708.71 / DSM 1257 / FGSC 987</strain>
    </source>
</reference>
<reference key="4">
    <citation type="journal article" date="2003" name="Nature">
        <title>The genome sequence of the filamentous fungus Neurospora crassa.</title>
        <authorList>
            <person name="Galagan J.E."/>
            <person name="Calvo S.E."/>
            <person name="Borkovich K.A."/>
            <person name="Selker E.U."/>
            <person name="Read N.D."/>
            <person name="Jaffe D.B."/>
            <person name="FitzHugh W."/>
            <person name="Ma L.-J."/>
            <person name="Smirnov S."/>
            <person name="Purcell S."/>
            <person name="Rehman B."/>
            <person name="Elkins T."/>
            <person name="Engels R."/>
            <person name="Wang S."/>
            <person name="Nielsen C.B."/>
            <person name="Butler J."/>
            <person name="Endrizzi M."/>
            <person name="Qui D."/>
            <person name="Ianakiev P."/>
            <person name="Bell-Pedersen D."/>
            <person name="Nelson M.A."/>
            <person name="Werner-Washburne M."/>
            <person name="Selitrennikoff C.P."/>
            <person name="Kinsey J.A."/>
            <person name="Braun E.L."/>
            <person name="Zelter A."/>
            <person name="Schulte U."/>
            <person name="Kothe G.O."/>
            <person name="Jedd G."/>
            <person name="Mewes H.-W."/>
            <person name="Staben C."/>
            <person name="Marcotte E."/>
            <person name="Greenberg D."/>
            <person name="Roy A."/>
            <person name="Foley K."/>
            <person name="Naylor J."/>
            <person name="Stange-Thomann N."/>
            <person name="Barrett R."/>
            <person name="Gnerre S."/>
            <person name="Kamal M."/>
            <person name="Kamvysselis M."/>
            <person name="Mauceli E.W."/>
            <person name="Bielke C."/>
            <person name="Rudd S."/>
            <person name="Frishman D."/>
            <person name="Krystofova S."/>
            <person name="Rasmussen C."/>
            <person name="Metzenberg R.L."/>
            <person name="Perkins D.D."/>
            <person name="Kroken S."/>
            <person name="Cogoni C."/>
            <person name="Macino G."/>
            <person name="Catcheside D.E.A."/>
            <person name="Li W."/>
            <person name="Pratt R.J."/>
            <person name="Osmani S.A."/>
            <person name="DeSouza C.P.C."/>
            <person name="Glass N.L."/>
            <person name="Orbach M.J."/>
            <person name="Berglund J.A."/>
            <person name="Voelker R."/>
            <person name="Yarden O."/>
            <person name="Plamann M."/>
            <person name="Seiler S."/>
            <person name="Dunlap J.C."/>
            <person name="Radford A."/>
            <person name="Aramayo R."/>
            <person name="Natvig D.O."/>
            <person name="Alex L.A."/>
            <person name="Mannhaupt G."/>
            <person name="Ebbole D.J."/>
            <person name="Freitag M."/>
            <person name="Paulsen I."/>
            <person name="Sachs M.S."/>
            <person name="Lander E.S."/>
            <person name="Nusbaum C."/>
            <person name="Birren B.W."/>
        </authorList>
    </citation>
    <scope>NUCLEOTIDE SEQUENCE [LARGE SCALE GENOMIC DNA] (HH4-1 AND HH4-2)</scope>
    <source>
        <strain>ATCC 24698 / 74-OR23-1A / CBS 708.71 / DSM 1257 / FGSC 987</strain>
    </source>
</reference>
<keyword id="KW-0007">Acetylation</keyword>
<keyword id="KW-0158">Chromosome</keyword>
<keyword id="KW-0238">DNA-binding</keyword>
<keyword id="KW-0488">Methylation</keyword>
<keyword id="KW-0544">Nucleosome core</keyword>
<keyword id="KW-0539">Nucleus</keyword>
<keyword id="KW-1185">Reference proteome</keyword>
<protein>
    <recommendedName>
        <fullName>Histone H4</fullName>
    </recommendedName>
</protein>
<proteinExistence type="inferred from homology"/>
<feature type="initiator methionine" description="Removed" evidence="1">
    <location>
        <position position="1"/>
    </location>
</feature>
<feature type="chain" id="PRO_0000158336" description="Histone H4">
    <location>
        <begin position="2"/>
        <end position="103"/>
    </location>
</feature>
<feature type="DNA-binding region">
    <location>
        <begin position="17"/>
        <end position="21"/>
    </location>
</feature>
<feature type="region of interest" description="Disordered" evidence="4">
    <location>
        <begin position="1"/>
        <end position="20"/>
    </location>
</feature>
<feature type="compositionally biased region" description="Gly residues" evidence="4">
    <location>
        <begin position="1"/>
        <end position="14"/>
    </location>
</feature>
<feature type="modified residue" description="N6-acetyl-N6-methyllysine; alternate" evidence="3">
    <location>
        <position position="6"/>
    </location>
</feature>
<feature type="modified residue" description="N6-methyllysine; alternate" evidence="2">
    <location>
        <position position="6"/>
    </location>
</feature>
<feature type="modified residue" description="N6-methyllysine; alternate" evidence="2">
    <location>
        <position position="9"/>
    </location>
</feature>
<feature type="modified residue" description="N6-acetyl-N6-methyllysine; alternate" evidence="3">
    <location>
        <position position="13"/>
    </location>
</feature>
<feature type="modified residue" description="N6-methyllysine; alternate" evidence="2">
    <location>
        <position position="13"/>
    </location>
</feature>
<feature type="modified residue" description="N6-glutaryllysine" evidence="2">
    <location>
        <position position="92"/>
    </location>
</feature>
<comment type="function">
    <text>Core component of nucleosome. Nucleosomes wrap and compact DNA into chromatin, limiting DNA accessibility to the cellular machineries which require DNA as a template. Histones thereby play a central role in transcription regulation, DNA repair, DNA replication and chromosomal stability. DNA accessibility is regulated via a complex set of post-translational modifications of histones, also called histone code, and nucleosome remodeling.</text>
</comment>
<comment type="subunit">
    <text>The nucleosome is a histone octamer containing two molecules each of H2A, H2B, H3 and H4 assembled in one H3-H4 heterotetramer and two H2A-H2B heterodimers. The octamer wraps approximately 147 bp of DNA.</text>
</comment>
<comment type="subcellular location">
    <subcellularLocation>
        <location evidence="1">Nucleus</location>
    </subcellularLocation>
    <subcellularLocation>
        <location evidence="1">Chromosome</location>
    </subcellularLocation>
</comment>
<comment type="PTM">
    <text evidence="2">Glutarylation at Lys-92 (H4K91glu) destabilizes nucleosomes by promoting dissociation of the H2A-H2B dimers from nucleosomes.</text>
</comment>
<comment type="similarity">
    <text evidence="5">Belongs to the histone H4 family.</text>
</comment>
<name>H4_NEUCR</name>
<sequence length="103" mass="11370">MTGRGKGGKGLGKGGAKRHRKILRDNIQGITKPAIRRLARRGGVKRISAMIYEETRGVLKTFLEGVIRDAVTYTEHAKRKTVTSLDVVYALKRQGRTLYGFGG</sequence>
<evidence type="ECO:0000250" key="1"/>
<evidence type="ECO:0000250" key="2">
    <source>
        <dbReference type="UniProtKB" id="P02309"/>
    </source>
</evidence>
<evidence type="ECO:0000250" key="3">
    <source>
        <dbReference type="UniProtKB" id="P62805"/>
    </source>
</evidence>
<evidence type="ECO:0000256" key="4">
    <source>
        <dbReference type="SAM" id="MobiDB-lite"/>
    </source>
</evidence>
<evidence type="ECO:0000305" key="5"/>
<accession>P04914</accession>
<accession>Q7RV47</accession>
<accession>Q7RV56</accession>
<gene>
    <name type="primary">hH4-1</name>
    <name type="synonym">hhf1</name>
    <name type="ORF">B7K22.020</name>
    <name type="ORF">NCU01634</name>
</gene>
<gene>
    <name type="primary">hH4-2</name>
    <name type="synonym">hhf2</name>
    <name type="ORF">NCU00212</name>
</gene>
<dbReference type="EMBL" id="X01611">
    <property type="protein sequence ID" value="CAA25760.1"/>
    <property type="molecule type" value="Genomic_DNA"/>
</dbReference>
<dbReference type="EMBL" id="AY062172">
    <property type="protein sequence ID" value="AAL38972.1"/>
    <property type="molecule type" value="Genomic_DNA"/>
</dbReference>
<dbReference type="EMBL" id="AY062173">
    <property type="protein sequence ID" value="AAL38974.1"/>
    <property type="molecule type" value="Genomic_DNA"/>
</dbReference>
<dbReference type="EMBL" id="AL670543">
    <property type="protein sequence ID" value="CAD21509.1"/>
    <property type="molecule type" value="Genomic_DNA"/>
</dbReference>
<dbReference type="EMBL" id="CM002237">
    <property type="protein sequence ID" value="EAA26766.2"/>
    <property type="molecule type" value="Genomic_DNA"/>
</dbReference>
<dbReference type="EMBL" id="CM002238">
    <property type="protein sequence ID" value="EAA27361.1"/>
    <property type="molecule type" value="Genomic_DNA"/>
</dbReference>
<dbReference type="PIR" id="S07913">
    <property type="entry name" value="S07913"/>
</dbReference>
<dbReference type="RefSeq" id="XP_956002.2">
    <property type="nucleotide sequence ID" value="XM_950909.3"/>
</dbReference>
<dbReference type="RefSeq" id="XP_956597.1">
    <property type="nucleotide sequence ID" value="XM_951504.3"/>
</dbReference>
<dbReference type="BMRB" id="P04914"/>
<dbReference type="SMR" id="P04914"/>
<dbReference type="DIP" id="DIP-59937N"/>
<dbReference type="FunCoup" id="P04914">
    <property type="interactions" value="1135"/>
</dbReference>
<dbReference type="IntAct" id="P04914">
    <property type="interactions" value="1"/>
</dbReference>
<dbReference type="STRING" id="367110.P04914"/>
<dbReference type="PaxDb" id="5141-EFNCRP00000000141"/>
<dbReference type="EnsemblFungi" id="EAA26766">
    <property type="protein sequence ID" value="EAA26766"/>
    <property type="gene ID" value="NCU01634"/>
</dbReference>
<dbReference type="EnsemblFungi" id="EAA27361">
    <property type="protein sequence ID" value="EAA27361"/>
    <property type="gene ID" value="NCU00212"/>
</dbReference>
<dbReference type="GeneID" id="3872149"/>
<dbReference type="GeneID" id="3872744"/>
<dbReference type="KEGG" id="ncr:NCU00212"/>
<dbReference type="KEGG" id="ncr:NCU01634"/>
<dbReference type="VEuPathDB" id="FungiDB:NCU00212"/>
<dbReference type="VEuPathDB" id="FungiDB:NCU01634"/>
<dbReference type="HOGENOM" id="CLU_109117_2_3_1"/>
<dbReference type="InParanoid" id="P04914"/>
<dbReference type="OrthoDB" id="4567608at2759"/>
<dbReference type="Proteomes" id="UP000001805">
    <property type="component" value="Chromosome 3, Linkage Group III"/>
</dbReference>
<dbReference type="Proteomes" id="UP000001805">
    <property type="component" value="Chromosome 6, Linkage Group II"/>
</dbReference>
<dbReference type="GO" id="GO:0000786">
    <property type="term" value="C:nucleosome"/>
    <property type="evidence" value="ECO:0007669"/>
    <property type="project" value="UniProtKB-KW"/>
</dbReference>
<dbReference type="GO" id="GO:0005634">
    <property type="term" value="C:nucleus"/>
    <property type="evidence" value="ECO:0007669"/>
    <property type="project" value="UniProtKB-SubCell"/>
</dbReference>
<dbReference type="GO" id="GO:0003677">
    <property type="term" value="F:DNA binding"/>
    <property type="evidence" value="ECO:0000318"/>
    <property type="project" value="GO_Central"/>
</dbReference>
<dbReference type="GO" id="GO:0046982">
    <property type="term" value="F:protein heterodimerization activity"/>
    <property type="evidence" value="ECO:0007669"/>
    <property type="project" value="InterPro"/>
</dbReference>
<dbReference type="GO" id="GO:0030527">
    <property type="term" value="F:structural constituent of chromatin"/>
    <property type="evidence" value="ECO:0007669"/>
    <property type="project" value="InterPro"/>
</dbReference>
<dbReference type="GO" id="GO:0006334">
    <property type="term" value="P:nucleosome assembly"/>
    <property type="evidence" value="ECO:0000318"/>
    <property type="project" value="GO_Central"/>
</dbReference>
<dbReference type="CDD" id="cd22912">
    <property type="entry name" value="HFD_H4"/>
    <property type="match status" value="1"/>
</dbReference>
<dbReference type="FunFam" id="1.10.20.10:FF:000007">
    <property type="entry name" value="Histone H4"/>
    <property type="match status" value="1"/>
</dbReference>
<dbReference type="Gene3D" id="1.10.20.10">
    <property type="entry name" value="Histone, subunit A"/>
    <property type="match status" value="1"/>
</dbReference>
<dbReference type="InterPro" id="IPR035425">
    <property type="entry name" value="CENP-T/H4_C"/>
</dbReference>
<dbReference type="InterPro" id="IPR009072">
    <property type="entry name" value="Histone-fold"/>
</dbReference>
<dbReference type="InterPro" id="IPR001951">
    <property type="entry name" value="Histone_H4"/>
</dbReference>
<dbReference type="InterPro" id="IPR019809">
    <property type="entry name" value="Histone_H4_CS"/>
</dbReference>
<dbReference type="InterPro" id="IPR004823">
    <property type="entry name" value="TAF_TATA-bd_Histone-like_dom"/>
</dbReference>
<dbReference type="PANTHER" id="PTHR10484">
    <property type="entry name" value="HISTONE H4"/>
    <property type="match status" value="1"/>
</dbReference>
<dbReference type="Pfam" id="PF15511">
    <property type="entry name" value="CENP-T_C"/>
    <property type="match status" value="1"/>
</dbReference>
<dbReference type="PRINTS" id="PR00623">
    <property type="entry name" value="HISTONEH4"/>
</dbReference>
<dbReference type="SMART" id="SM00417">
    <property type="entry name" value="H4"/>
    <property type="match status" value="1"/>
</dbReference>
<dbReference type="SMART" id="SM00803">
    <property type="entry name" value="TAF"/>
    <property type="match status" value="1"/>
</dbReference>
<dbReference type="SUPFAM" id="SSF47113">
    <property type="entry name" value="Histone-fold"/>
    <property type="match status" value="1"/>
</dbReference>
<dbReference type="PROSITE" id="PS00047">
    <property type="entry name" value="HISTONE_H4"/>
    <property type="match status" value="1"/>
</dbReference>
<organism>
    <name type="scientific">Neurospora crassa (strain ATCC 24698 / 74-OR23-1A / CBS 708.71 / DSM 1257 / FGSC 987)</name>
    <dbReference type="NCBI Taxonomy" id="367110"/>
    <lineage>
        <taxon>Eukaryota</taxon>
        <taxon>Fungi</taxon>
        <taxon>Dikarya</taxon>
        <taxon>Ascomycota</taxon>
        <taxon>Pezizomycotina</taxon>
        <taxon>Sordariomycetes</taxon>
        <taxon>Sordariomycetidae</taxon>
        <taxon>Sordariales</taxon>
        <taxon>Sordariaceae</taxon>
        <taxon>Neurospora</taxon>
    </lineage>
</organism>